<protein>
    <recommendedName>
        <fullName evidence="1">Large ribosomal subunit protein uL1</fullName>
    </recommendedName>
    <alternativeName>
        <fullName evidence="2">50S ribosomal protein L1</fullName>
    </alternativeName>
</protein>
<sequence length="238" mass="26033">MAKKLSRRLREALEKVEDRAYEPLEALTLLKETATAKFDETAEAHIRLGIDPKYTDQQLRTTVAFPKGTGQSVRVAVITSGEQVKVAEESGADLVGSEELIEDIQKGMMDFEVLIATPDMMPKVARLGRQLGPRGLMPSPKGGTVTTDVATAIAAFKAGKQEFRADRAGIVHVLFGKSSFAAEDLLVNLKALQETIDRNRPSGAKGRYWRSIYVSASMGPSIQVDINALRDLFIEEKA</sequence>
<keyword id="KW-1185">Reference proteome</keyword>
<keyword id="KW-0678">Repressor</keyword>
<keyword id="KW-0687">Ribonucleoprotein</keyword>
<keyword id="KW-0689">Ribosomal protein</keyword>
<keyword id="KW-0694">RNA-binding</keyword>
<keyword id="KW-0699">rRNA-binding</keyword>
<keyword id="KW-0810">Translation regulation</keyword>
<keyword id="KW-0820">tRNA-binding</keyword>
<dbReference type="EMBL" id="CP000951">
    <property type="protein sequence ID" value="ACA99031.1"/>
    <property type="molecule type" value="Genomic_DNA"/>
</dbReference>
<dbReference type="RefSeq" id="WP_012306655.1">
    <property type="nucleotide sequence ID" value="NZ_JAHHPU010000001.1"/>
</dbReference>
<dbReference type="SMR" id="B1XJH1"/>
<dbReference type="STRING" id="32049.SYNPCC7002_A1028"/>
<dbReference type="KEGG" id="syp:SYNPCC7002_A1028"/>
<dbReference type="eggNOG" id="COG0081">
    <property type="taxonomic scope" value="Bacteria"/>
</dbReference>
<dbReference type="HOGENOM" id="CLU_062853_0_0_3"/>
<dbReference type="Proteomes" id="UP000001688">
    <property type="component" value="Chromosome"/>
</dbReference>
<dbReference type="GO" id="GO:0015934">
    <property type="term" value="C:large ribosomal subunit"/>
    <property type="evidence" value="ECO:0007669"/>
    <property type="project" value="InterPro"/>
</dbReference>
<dbReference type="GO" id="GO:0019843">
    <property type="term" value="F:rRNA binding"/>
    <property type="evidence" value="ECO:0007669"/>
    <property type="project" value="UniProtKB-UniRule"/>
</dbReference>
<dbReference type="GO" id="GO:0003735">
    <property type="term" value="F:structural constituent of ribosome"/>
    <property type="evidence" value="ECO:0007669"/>
    <property type="project" value="InterPro"/>
</dbReference>
<dbReference type="GO" id="GO:0000049">
    <property type="term" value="F:tRNA binding"/>
    <property type="evidence" value="ECO:0007669"/>
    <property type="project" value="UniProtKB-KW"/>
</dbReference>
<dbReference type="GO" id="GO:0006417">
    <property type="term" value="P:regulation of translation"/>
    <property type="evidence" value="ECO:0007669"/>
    <property type="project" value="UniProtKB-KW"/>
</dbReference>
<dbReference type="GO" id="GO:0006412">
    <property type="term" value="P:translation"/>
    <property type="evidence" value="ECO:0007669"/>
    <property type="project" value="UniProtKB-UniRule"/>
</dbReference>
<dbReference type="CDD" id="cd00403">
    <property type="entry name" value="Ribosomal_L1"/>
    <property type="match status" value="1"/>
</dbReference>
<dbReference type="FunFam" id="3.40.50.790:FF:000001">
    <property type="entry name" value="50S ribosomal protein L1"/>
    <property type="match status" value="1"/>
</dbReference>
<dbReference type="Gene3D" id="3.30.190.20">
    <property type="match status" value="1"/>
</dbReference>
<dbReference type="Gene3D" id="3.40.50.790">
    <property type="match status" value="1"/>
</dbReference>
<dbReference type="HAMAP" id="MF_01318_B">
    <property type="entry name" value="Ribosomal_uL1_B"/>
    <property type="match status" value="1"/>
</dbReference>
<dbReference type="InterPro" id="IPR005878">
    <property type="entry name" value="Ribosom_uL1_bac-type"/>
</dbReference>
<dbReference type="InterPro" id="IPR002143">
    <property type="entry name" value="Ribosomal_uL1"/>
</dbReference>
<dbReference type="InterPro" id="IPR023674">
    <property type="entry name" value="Ribosomal_uL1-like"/>
</dbReference>
<dbReference type="InterPro" id="IPR028364">
    <property type="entry name" value="Ribosomal_uL1/biogenesis"/>
</dbReference>
<dbReference type="InterPro" id="IPR016095">
    <property type="entry name" value="Ribosomal_uL1_3-a/b-sand"/>
</dbReference>
<dbReference type="InterPro" id="IPR023673">
    <property type="entry name" value="Ribosomal_uL1_CS"/>
</dbReference>
<dbReference type="NCBIfam" id="TIGR01169">
    <property type="entry name" value="rplA_bact"/>
    <property type="match status" value="1"/>
</dbReference>
<dbReference type="PANTHER" id="PTHR36427">
    <property type="entry name" value="54S RIBOSOMAL PROTEIN L1, MITOCHONDRIAL"/>
    <property type="match status" value="1"/>
</dbReference>
<dbReference type="PANTHER" id="PTHR36427:SF3">
    <property type="entry name" value="LARGE RIBOSOMAL SUBUNIT PROTEIN UL1M"/>
    <property type="match status" value="1"/>
</dbReference>
<dbReference type="Pfam" id="PF00687">
    <property type="entry name" value="Ribosomal_L1"/>
    <property type="match status" value="1"/>
</dbReference>
<dbReference type="PIRSF" id="PIRSF002155">
    <property type="entry name" value="Ribosomal_L1"/>
    <property type="match status" value="1"/>
</dbReference>
<dbReference type="SUPFAM" id="SSF56808">
    <property type="entry name" value="Ribosomal protein L1"/>
    <property type="match status" value="1"/>
</dbReference>
<dbReference type="PROSITE" id="PS01199">
    <property type="entry name" value="RIBOSOMAL_L1"/>
    <property type="match status" value="1"/>
</dbReference>
<comment type="function">
    <text evidence="1">Binds directly to 23S rRNA. The L1 stalk is quite mobile in the ribosome, and is involved in E site tRNA release.</text>
</comment>
<comment type="function">
    <text evidence="1">Protein L1 is also a translational repressor protein, it controls the translation of the L11 operon by binding to its mRNA.</text>
</comment>
<comment type="subunit">
    <text evidence="1">Part of the 50S ribosomal subunit.</text>
</comment>
<comment type="similarity">
    <text evidence="1">Belongs to the universal ribosomal protein uL1 family.</text>
</comment>
<accession>B1XJH1</accession>
<gene>
    <name evidence="1" type="primary">rplA</name>
    <name evidence="1" type="synonym">rpl1</name>
    <name type="ordered locus">SYNPCC7002_A1028</name>
</gene>
<evidence type="ECO:0000255" key="1">
    <source>
        <dbReference type="HAMAP-Rule" id="MF_01318"/>
    </source>
</evidence>
<evidence type="ECO:0000305" key="2"/>
<proteinExistence type="inferred from homology"/>
<organism>
    <name type="scientific">Picosynechococcus sp. (strain ATCC 27264 / PCC 7002 / PR-6)</name>
    <name type="common">Agmenellum quadruplicatum</name>
    <dbReference type="NCBI Taxonomy" id="32049"/>
    <lineage>
        <taxon>Bacteria</taxon>
        <taxon>Bacillati</taxon>
        <taxon>Cyanobacteriota</taxon>
        <taxon>Cyanophyceae</taxon>
        <taxon>Oscillatoriophycideae</taxon>
        <taxon>Chroococcales</taxon>
        <taxon>Geminocystaceae</taxon>
        <taxon>Picosynechococcus</taxon>
    </lineage>
</organism>
<feature type="chain" id="PRO_1000141472" description="Large ribosomal subunit protein uL1">
    <location>
        <begin position="1"/>
        <end position="238"/>
    </location>
</feature>
<name>RL1_PICP2</name>
<reference key="1">
    <citation type="submission" date="2008-02" db="EMBL/GenBank/DDBJ databases">
        <title>Complete sequence of Synechococcus sp. PCC 7002.</title>
        <authorList>
            <person name="Li T."/>
            <person name="Zhao J."/>
            <person name="Zhao C."/>
            <person name="Liu Z."/>
            <person name="Zhao F."/>
            <person name="Marquardt J."/>
            <person name="Nomura C.T."/>
            <person name="Persson S."/>
            <person name="Detter J.C."/>
            <person name="Richardson P.M."/>
            <person name="Lanz C."/>
            <person name="Schuster S.C."/>
            <person name="Wang J."/>
            <person name="Li S."/>
            <person name="Huang X."/>
            <person name="Cai T."/>
            <person name="Yu Z."/>
            <person name="Luo J."/>
            <person name="Zhao J."/>
            <person name="Bryant D.A."/>
        </authorList>
    </citation>
    <scope>NUCLEOTIDE SEQUENCE [LARGE SCALE GENOMIC DNA]</scope>
    <source>
        <strain>ATCC 27264 / PCC 7002 / PR-6</strain>
    </source>
</reference>